<reference key="1">
    <citation type="journal article" date="1998" name="Infect. Immun.">
        <title>Filarial nematode parasites secrete a homologue of the human cytokine macrophage migration inhibitory factor.</title>
        <authorList>
            <person name="Pastrana D.V."/>
            <person name="Raghavan N."/>
            <person name="Fitzgerald P."/>
            <person name="Eisinger S.W."/>
            <person name="Metz C."/>
            <person name="Bucala R."/>
            <person name="Schleimer R.P."/>
            <person name="Bickel C."/>
            <person name="Scott A.L."/>
        </authorList>
    </citation>
    <scope>NUCLEOTIDE SEQUENCE [GENOMIC DNA / MRNA]</scope>
    <scope>FUNCTION</scope>
    <scope>SUBCELLULAR LOCATION</scope>
    <source>
        <strain>TRW</strain>
    </source>
</reference>
<reference key="2">
    <citation type="journal article" date="2002" name="Genome Biol.">
        <title>Conservation of long-range and micro-synteny between the genomes of two distantly related nematodes.</title>
        <authorList>
            <person name="Gulliano D.B."/>
            <person name="Hall N."/>
            <person name="Jones S.J.M."/>
            <person name="Clark L.N."/>
            <person name="Corton C.H."/>
            <person name="Barrell B.G."/>
            <person name="Blaxter M.L."/>
        </authorList>
    </citation>
    <scope>NUCLEOTIDE SEQUENCE [GENOMIC DNA]</scope>
</reference>
<reference key="3">
    <citation type="journal article" date="2007" name="Science">
        <title>Draft genome of the filarial nematode parasite Brugia malayi.</title>
        <authorList>
            <person name="Ghedin E."/>
            <person name="Wang S."/>
            <person name="Spiro D."/>
            <person name="Caler E."/>
            <person name="Zhao Q."/>
            <person name="Crabtree J."/>
            <person name="Allen J.E."/>
            <person name="Delcher A.L."/>
            <person name="Guiliano D.B."/>
            <person name="Miranda-Saavedra D."/>
            <person name="Angiuoli S.V."/>
            <person name="Creasy T."/>
            <person name="Amedeo P."/>
            <person name="Haas B."/>
            <person name="El-Sayed N.M."/>
            <person name="Wortman J.R."/>
            <person name="Feldblyum T."/>
            <person name="Tallon L."/>
            <person name="Schatz M."/>
            <person name="Shumway M."/>
            <person name="Koo H."/>
            <person name="Salzberg S.L."/>
            <person name="Schobel S."/>
            <person name="Pertea M."/>
            <person name="Pop M."/>
            <person name="White O."/>
            <person name="Barton G.J."/>
            <person name="Carlow C.K.S."/>
            <person name="Crawford M.J."/>
            <person name="Daub J."/>
            <person name="Dimmic M.W."/>
            <person name="Estes C.F."/>
            <person name="Foster J.M."/>
            <person name="Ganatra M."/>
            <person name="Gregory W.F."/>
            <person name="Johnson N.M."/>
            <person name="Jin J."/>
            <person name="Komuniecki R."/>
            <person name="Korf I."/>
            <person name="Kumar S."/>
            <person name="Laney S."/>
            <person name="Li B.-W."/>
            <person name="Li W."/>
            <person name="Lindblom T.H."/>
            <person name="Lustigman S."/>
            <person name="Ma D."/>
            <person name="Maina C.V."/>
            <person name="Martin D.M."/>
            <person name="McCarter J.P."/>
            <person name="McReynolds L."/>
            <person name="Mitreva M."/>
            <person name="Nutman T.B."/>
            <person name="Parkinson J."/>
            <person name="Peregrin-Alvarez J.M."/>
            <person name="Poole C."/>
            <person name="Ren Q."/>
            <person name="Saunders L."/>
            <person name="Sluder A.E."/>
            <person name="Smith K."/>
            <person name="Stanke M."/>
            <person name="Unnasch T.R."/>
            <person name="Ware J."/>
            <person name="Wei A.D."/>
            <person name="Weil G."/>
            <person name="Williams D.J."/>
            <person name="Zhang Y."/>
            <person name="Williams S.A."/>
            <person name="Fraser-Liggett C."/>
            <person name="Slatko B."/>
            <person name="Blaxter M.L."/>
            <person name="Scott A.L."/>
        </authorList>
    </citation>
    <scope>NUCLEOTIDE SEQUENCE [LARGE SCALE GENOMIC DNA]</scope>
</reference>
<sequence>MPYFTIDTNIPQNSISSAFLKKASNVVAKALGKPESYVSIHVNGGQAMVFGGSEDPCAVCVLKSIGCVGPKVNNSHAEKLYKLLADELKIPKNRCYIEFVDIEASSMAFNGSTFG</sequence>
<evidence type="ECO:0000250" key="1"/>
<evidence type="ECO:0000269" key="2">
    <source>
    </source>
</evidence>
<evidence type="ECO:0000305" key="3"/>
<name>MIFH_BRUMA</name>
<dbReference type="EC" id="5.3.2.1"/>
<dbReference type="EC" id="5.3.3.12"/>
<dbReference type="EMBL" id="AF002699">
    <property type="protein sequence ID" value="AAB60943.1"/>
    <property type="molecule type" value="Genomic_DNA"/>
</dbReference>
<dbReference type="EMBL" id="U88035">
    <property type="protein sequence ID" value="AAC82502.1"/>
    <property type="molecule type" value="mRNA"/>
</dbReference>
<dbReference type="EMBL" id="AL606837">
    <property type="protein sequence ID" value="CAC70155.1"/>
    <property type="molecule type" value="Genomic_DNA"/>
</dbReference>
<dbReference type="EMBL" id="DS239369">
    <property type="protein sequence ID" value="EDP34019.1"/>
    <property type="molecule type" value="Genomic_DNA"/>
</dbReference>
<dbReference type="SMR" id="P91850"/>
<dbReference type="FunCoup" id="P91850">
    <property type="interactions" value="242"/>
</dbReference>
<dbReference type="STRING" id="6279.P91850"/>
<dbReference type="EnsemblMetazoa" id="Bm6870.1">
    <property type="protein sequence ID" value="Bm6870.1"/>
    <property type="gene ID" value="WBGene00227131"/>
</dbReference>
<dbReference type="GeneID" id="6100584"/>
<dbReference type="KEGG" id="bmy:BM_BM6870"/>
<dbReference type="CTD" id="6100584"/>
<dbReference type="WormBase" id="Bm6870">
    <property type="protein sequence ID" value="BM07480"/>
    <property type="gene ID" value="WBGene00227131"/>
    <property type="gene designation" value="Bma-mif-1"/>
</dbReference>
<dbReference type="InParanoid" id="P91850"/>
<dbReference type="OMA" id="YINFFDM"/>
<dbReference type="OrthoDB" id="255819at2759"/>
<dbReference type="Proteomes" id="UP000006672">
    <property type="component" value="Unassembled WGS sequence"/>
</dbReference>
<dbReference type="GO" id="GO:0005615">
    <property type="term" value="C:extracellular space"/>
    <property type="evidence" value="ECO:0007669"/>
    <property type="project" value="UniProtKB-KW"/>
</dbReference>
<dbReference type="GO" id="GO:0005125">
    <property type="term" value="F:cytokine activity"/>
    <property type="evidence" value="ECO:0007669"/>
    <property type="project" value="UniProtKB-KW"/>
</dbReference>
<dbReference type="GO" id="GO:0004167">
    <property type="term" value="F:dopachrome isomerase activity"/>
    <property type="evidence" value="ECO:0007669"/>
    <property type="project" value="UniProtKB-EC"/>
</dbReference>
<dbReference type="GO" id="GO:0050178">
    <property type="term" value="F:phenylpyruvate tautomerase activity"/>
    <property type="evidence" value="ECO:0007669"/>
    <property type="project" value="UniProtKB-EC"/>
</dbReference>
<dbReference type="Gene3D" id="3.30.429.10">
    <property type="entry name" value="Macrophage Migration Inhibitory Factor"/>
    <property type="match status" value="1"/>
</dbReference>
<dbReference type="InterPro" id="IPR001398">
    <property type="entry name" value="Macrophage_inhib_fac"/>
</dbReference>
<dbReference type="InterPro" id="IPR019829">
    <property type="entry name" value="Macrophage_inhib_fac_CS"/>
</dbReference>
<dbReference type="InterPro" id="IPR014347">
    <property type="entry name" value="Tautomerase/MIF_sf"/>
</dbReference>
<dbReference type="PANTHER" id="PTHR11954">
    <property type="entry name" value="D-DOPACHROME DECARBOXYLASE"/>
    <property type="match status" value="1"/>
</dbReference>
<dbReference type="PANTHER" id="PTHR11954:SF6">
    <property type="entry name" value="MACROPHAGE MIGRATION INHIBITORY FACTOR"/>
    <property type="match status" value="1"/>
</dbReference>
<dbReference type="Pfam" id="PF01187">
    <property type="entry name" value="MIF"/>
    <property type="match status" value="1"/>
</dbReference>
<dbReference type="SUPFAM" id="SSF55331">
    <property type="entry name" value="Tautomerase/MIF"/>
    <property type="match status" value="1"/>
</dbReference>
<dbReference type="PROSITE" id="PS01158">
    <property type="entry name" value="MIF"/>
    <property type="match status" value="1"/>
</dbReference>
<organism>
    <name type="scientific">Brugia malayi</name>
    <name type="common">Filarial nematode worm</name>
    <dbReference type="NCBI Taxonomy" id="6279"/>
    <lineage>
        <taxon>Eukaryota</taxon>
        <taxon>Metazoa</taxon>
        <taxon>Ecdysozoa</taxon>
        <taxon>Nematoda</taxon>
        <taxon>Chromadorea</taxon>
        <taxon>Rhabditida</taxon>
        <taxon>Spirurina</taxon>
        <taxon>Spiruromorpha</taxon>
        <taxon>Filarioidea</taxon>
        <taxon>Onchocercidae</taxon>
        <taxon>Brugia</taxon>
    </lineage>
</organism>
<accession>P91850</accession>
<accession>A8PJU3</accession>
<accession>O02555</accession>
<accession>Q8IHI7</accession>
<gene>
    <name type="ORF">Bm1_28435</name>
    <name type="ORF">BMBAC01P19.1</name>
</gene>
<proteinExistence type="inferred from homology"/>
<keyword id="KW-0202">Cytokine</keyword>
<keyword id="KW-0413">Isomerase</keyword>
<keyword id="KW-1185">Reference proteome</keyword>
<keyword id="KW-0964">Secreted</keyword>
<protein>
    <recommendedName>
        <fullName>Macrophage migration inhibitory factor homolog</fullName>
        <shortName>Bm-MIF-1</shortName>
        <shortName>BmMIF</shortName>
        <shortName>MIF</shortName>
        <ecNumber>5.3.2.1</ecNumber>
    </recommendedName>
    <alternativeName>
        <fullName>L-dopachrome isomerase</fullName>
    </alternativeName>
    <alternativeName>
        <fullName>L-dopachrome tautomerase</fullName>
        <ecNumber>5.3.3.12</ecNumber>
    </alternativeName>
    <alternativeName>
        <fullName>Phenylpyruvate tautomerase</fullName>
    </alternativeName>
</protein>
<comment type="function">
    <text evidence="1 2">Tautomerization of the methyl ester of L-dopachrome (By similarity). Inhibits migration of human peripheral blood mononuclear cells.</text>
</comment>
<comment type="catalytic activity">
    <reaction>
        <text>L-dopachrome = 5,6-dihydroxyindole-2-carboxylate</text>
        <dbReference type="Rhea" id="RHEA:13041"/>
        <dbReference type="ChEBI" id="CHEBI:16875"/>
        <dbReference type="ChEBI" id="CHEBI:57509"/>
        <dbReference type="EC" id="5.3.3.12"/>
    </reaction>
</comment>
<comment type="catalytic activity">
    <reaction>
        <text>3-phenylpyruvate = enol-phenylpyruvate</text>
        <dbReference type="Rhea" id="RHEA:17097"/>
        <dbReference type="ChEBI" id="CHEBI:16815"/>
        <dbReference type="ChEBI" id="CHEBI:18005"/>
        <dbReference type="EC" id="5.3.2.1"/>
    </reaction>
</comment>
<comment type="subcellular location">
    <subcellularLocation>
        <location evidence="2">Secreted</location>
    </subcellularLocation>
</comment>
<comment type="similarity">
    <text evidence="3">Belongs to the MIF family.</text>
</comment>
<feature type="initiator methionine" description="Removed">
    <location>
        <position position="1"/>
    </location>
</feature>
<feature type="chain" id="PRO_0000158073" description="Macrophage migration inhibitory factor homolog">
    <location>
        <begin position="2"/>
        <end position="115"/>
    </location>
</feature>
<feature type="active site" description="Proton acceptor; via imino nitrogen" evidence="1">
    <location>
        <position position="2"/>
    </location>
</feature>
<feature type="binding site" evidence="1">
    <location>
        <position position="33"/>
    </location>
    <ligand>
        <name>substrate</name>
    </ligand>
</feature>
<feature type="binding site" evidence="1">
    <location>
        <position position="65"/>
    </location>
    <ligand>
        <name>substrate</name>
    </ligand>
</feature>
<feature type="sequence conflict" description="In Ref. 1; AAB60943/AAC82502." evidence="3" ref="1">
    <original>F</original>
    <variation>L</variation>
    <location>
        <position position="114"/>
    </location>
</feature>